<comment type="subcellular location">
    <subcellularLocation>
        <location evidence="1">Nucleus</location>
    </subcellularLocation>
</comment>
<keyword id="KW-0238">DNA-binding</keyword>
<keyword id="KW-0539">Nucleus</keyword>
<keyword id="KW-1185">Reference proteome</keyword>
<keyword id="KW-0804">Transcription</keyword>
<keyword id="KW-0805">Transcription regulation</keyword>
<proteinExistence type="evidence at transcript level"/>
<accession>Q9SJ98</accession>
<feature type="chain" id="PRO_0000412847" description="B3 domain-containing protein At2g24670">
    <location>
        <begin position="1"/>
        <end position="251"/>
    </location>
</feature>
<feature type="DNA-binding region" description="TF-B3">
    <location>
        <begin position="153"/>
        <end position="249"/>
    </location>
</feature>
<feature type="region of interest" description="Disordered" evidence="2">
    <location>
        <begin position="48"/>
        <end position="111"/>
    </location>
</feature>
<feature type="compositionally biased region" description="Basic and acidic residues" evidence="2">
    <location>
        <begin position="56"/>
        <end position="70"/>
    </location>
</feature>
<feature type="sequence conflict" description="In Ref. 4; AY464575." evidence="3" ref="4">
    <original>D</original>
    <variation>G</variation>
    <location>
        <position position="127"/>
    </location>
</feature>
<gene>
    <name type="ordered locus">At2g24670</name>
    <name type="ORF">F25P17.3</name>
</gene>
<reference key="1">
    <citation type="journal article" date="1999" name="Nature">
        <title>Sequence and analysis of chromosome 2 of the plant Arabidopsis thaliana.</title>
        <authorList>
            <person name="Lin X."/>
            <person name="Kaul S."/>
            <person name="Rounsley S.D."/>
            <person name="Shea T.P."/>
            <person name="Benito M.-I."/>
            <person name="Town C.D."/>
            <person name="Fujii C.Y."/>
            <person name="Mason T.M."/>
            <person name="Bowman C.L."/>
            <person name="Barnstead M.E."/>
            <person name="Feldblyum T.V."/>
            <person name="Buell C.R."/>
            <person name="Ketchum K.A."/>
            <person name="Lee J.J."/>
            <person name="Ronning C.M."/>
            <person name="Koo H.L."/>
            <person name="Moffat K.S."/>
            <person name="Cronin L.A."/>
            <person name="Shen M."/>
            <person name="Pai G."/>
            <person name="Van Aken S."/>
            <person name="Umayam L."/>
            <person name="Tallon L.J."/>
            <person name="Gill J.E."/>
            <person name="Adams M.D."/>
            <person name="Carrera A.J."/>
            <person name="Creasy T.H."/>
            <person name="Goodman H.M."/>
            <person name="Somerville C.R."/>
            <person name="Copenhaver G.P."/>
            <person name="Preuss D."/>
            <person name="Nierman W.C."/>
            <person name="White O."/>
            <person name="Eisen J.A."/>
            <person name="Salzberg S.L."/>
            <person name="Fraser C.M."/>
            <person name="Venter J.C."/>
        </authorList>
    </citation>
    <scope>NUCLEOTIDE SEQUENCE [LARGE SCALE GENOMIC DNA]</scope>
    <source>
        <strain>cv. Columbia</strain>
    </source>
</reference>
<reference key="2">
    <citation type="journal article" date="2017" name="Plant J.">
        <title>Araport11: a complete reannotation of the Arabidopsis thaliana reference genome.</title>
        <authorList>
            <person name="Cheng C.Y."/>
            <person name="Krishnakumar V."/>
            <person name="Chan A.P."/>
            <person name="Thibaud-Nissen F."/>
            <person name="Schobel S."/>
            <person name="Town C.D."/>
        </authorList>
    </citation>
    <scope>GENOME REANNOTATION</scope>
    <source>
        <strain>cv. Columbia</strain>
    </source>
</reference>
<reference key="3">
    <citation type="submission" date="2009-03" db="EMBL/GenBank/DDBJ databases">
        <title>ORF cloning and analysis of Arabidopsis transcription factor genes.</title>
        <authorList>
            <person name="Fujita M."/>
            <person name="Mizukado S."/>
            <person name="Seki M."/>
            <person name="Shinozaki K."/>
            <person name="Mitsuda N."/>
            <person name="Takiguchi Y."/>
            <person name="Takagi M."/>
        </authorList>
    </citation>
    <scope>NUCLEOTIDE SEQUENCE [LARGE SCALE GENOMIC DNA]</scope>
</reference>
<reference key="4">
    <citation type="journal article" date="2005" name="Plant Physiol.">
        <title>Analysis of the cDNAs of hypothetical genes on Arabidopsis chromosome 2 reveals numerous transcript variants.</title>
        <authorList>
            <person name="Xiao Y.-L."/>
            <person name="Smith S.R."/>
            <person name="Ishmael N."/>
            <person name="Redman J.C."/>
            <person name="Kumar N."/>
            <person name="Monaghan E.L."/>
            <person name="Ayele M."/>
            <person name="Haas B.J."/>
            <person name="Wu H.C."/>
            <person name="Town C.D."/>
        </authorList>
    </citation>
    <scope>NUCLEOTIDE SEQUENCE [LARGE SCALE MRNA] OF 1-208</scope>
    <source>
        <strain>cv. Columbia</strain>
    </source>
</reference>
<reference key="5">
    <citation type="journal article" date="2008" name="Trends Plant Sci.">
        <title>The plant B3 superfamily.</title>
        <authorList>
            <person name="Swaminathan K."/>
            <person name="Peterson K."/>
            <person name="Jack T."/>
        </authorList>
    </citation>
    <scope>GENE FAMILY</scope>
</reference>
<name>Y2467_ARATH</name>
<sequence length="251" mass="29040">MIFKKEVSKEDVECVETLLMMSNSKPTREEYNKLQLCILRRNKSSTITTPSTVMESKSHIHDHSLRESPTRRSRNRHDLPPMSPPMEQRKSKKAKRSTDASSSKTREPTPGWLISLMRSKNGGDVEDNSKKIIDKELFQTDVDPHQSRLSIPVSQIVELEFLNHEEKRAIEEDANRVRKEGVDAILVDSHLREFPVNLRLRDMRGILLYNLVAGWNQVVTDCLLEENTNIRLWSFHADDTLYFALVPLYAN</sequence>
<protein>
    <recommendedName>
        <fullName>B3 domain-containing protein At2g24670</fullName>
    </recommendedName>
</protein>
<dbReference type="EMBL" id="AC006954">
    <property type="protein sequence ID" value="AAD23882.1"/>
    <property type="molecule type" value="Genomic_DNA"/>
</dbReference>
<dbReference type="EMBL" id="CP002685">
    <property type="protein sequence ID" value="AEC07611.1"/>
    <property type="molecule type" value="Genomic_DNA"/>
</dbReference>
<dbReference type="EMBL" id="AB493563">
    <property type="protein sequence ID" value="BAH30401.1"/>
    <property type="molecule type" value="Genomic_DNA"/>
</dbReference>
<dbReference type="EMBL" id="AY464575">
    <property type="status" value="NOT_ANNOTATED_CDS"/>
    <property type="molecule type" value="mRNA"/>
</dbReference>
<dbReference type="PIR" id="E84639">
    <property type="entry name" value="E84639"/>
</dbReference>
<dbReference type="RefSeq" id="NP_180043.1">
    <property type="nucleotide sequence ID" value="NM_128028.2"/>
</dbReference>
<dbReference type="STRING" id="3702.Q9SJ98"/>
<dbReference type="GlyGen" id="Q9SJ98">
    <property type="glycosylation" value="1 site"/>
</dbReference>
<dbReference type="PaxDb" id="3702-AT2G24670.1"/>
<dbReference type="EnsemblPlants" id="AT2G24670.1">
    <property type="protein sequence ID" value="AT2G24670.1"/>
    <property type="gene ID" value="AT2G24670"/>
</dbReference>
<dbReference type="GeneID" id="817003"/>
<dbReference type="Gramene" id="AT2G24670.1">
    <property type="protein sequence ID" value="AT2G24670.1"/>
    <property type="gene ID" value="AT2G24670"/>
</dbReference>
<dbReference type="KEGG" id="ath:AT2G24670"/>
<dbReference type="Araport" id="AT2G24670"/>
<dbReference type="TAIR" id="AT2G24670"/>
<dbReference type="HOGENOM" id="CLU_1108394_0_0_1"/>
<dbReference type="InParanoid" id="Q9SJ98"/>
<dbReference type="OMA" id="PCGLDMI"/>
<dbReference type="PhylomeDB" id="Q9SJ98"/>
<dbReference type="PRO" id="PR:Q9SJ98"/>
<dbReference type="Proteomes" id="UP000006548">
    <property type="component" value="Chromosome 2"/>
</dbReference>
<dbReference type="ExpressionAtlas" id="Q9SJ98">
    <property type="expression patterns" value="baseline"/>
</dbReference>
<dbReference type="GO" id="GO:0005634">
    <property type="term" value="C:nucleus"/>
    <property type="evidence" value="ECO:0007669"/>
    <property type="project" value="UniProtKB-SubCell"/>
</dbReference>
<dbReference type="GO" id="GO:0003677">
    <property type="term" value="F:DNA binding"/>
    <property type="evidence" value="ECO:0007669"/>
    <property type="project" value="UniProtKB-KW"/>
</dbReference>
<dbReference type="Gene3D" id="2.40.330.10">
    <property type="entry name" value="DNA-binding pseudobarrel domain"/>
    <property type="match status" value="1"/>
</dbReference>
<dbReference type="InterPro" id="IPR005508">
    <property type="entry name" value="At2g31720-like"/>
</dbReference>
<dbReference type="InterPro" id="IPR015300">
    <property type="entry name" value="DNA-bd_pseudobarrel_sf"/>
</dbReference>
<dbReference type="PANTHER" id="PTHR31541">
    <property type="entry name" value="B3 DOMAIN PLANT PROTEIN-RELATED"/>
    <property type="match status" value="1"/>
</dbReference>
<dbReference type="PANTHER" id="PTHR31541:SF25">
    <property type="entry name" value="GAMMA-GLIADIN B"/>
    <property type="match status" value="1"/>
</dbReference>
<dbReference type="Pfam" id="PF03754">
    <property type="entry name" value="At2g31720-like"/>
    <property type="match status" value="1"/>
</dbReference>
<dbReference type="SUPFAM" id="SSF101936">
    <property type="entry name" value="DNA-binding pseudobarrel domain"/>
    <property type="match status" value="1"/>
</dbReference>
<evidence type="ECO:0000250" key="1"/>
<evidence type="ECO:0000256" key="2">
    <source>
        <dbReference type="SAM" id="MobiDB-lite"/>
    </source>
</evidence>
<evidence type="ECO:0000305" key="3"/>
<organism>
    <name type="scientific">Arabidopsis thaliana</name>
    <name type="common">Mouse-ear cress</name>
    <dbReference type="NCBI Taxonomy" id="3702"/>
    <lineage>
        <taxon>Eukaryota</taxon>
        <taxon>Viridiplantae</taxon>
        <taxon>Streptophyta</taxon>
        <taxon>Embryophyta</taxon>
        <taxon>Tracheophyta</taxon>
        <taxon>Spermatophyta</taxon>
        <taxon>Magnoliopsida</taxon>
        <taxon>eudicotyledons</taxon>
        <taxon>Gunneridae</taxon>
        <taxon>Pentapetalae</taxon>
        <taxon>rosids</taxon>
        <taxon>malvids</taxon>
        <taxon>Brassicales</taxon>
        <taxon>Brassicaceae</taxon>
        <taxon>Camelineae</taxon>
        <taxon>Arabidopsis</taxon>
    </lineage>
</organism>